<proteinExistence type="evidence at transcript level"/>
<dbReference type="EMBL" id="CR381616">
    <property type="status" value="NOT_ANNOTATED_CDS"/>
    <property type="molecule type" value="Genomic_DNA"/>
</dbReference>
<dbReference type="RefSeq" id="XP_005162346.2">
    <property type="nucleotide sequence ID" value="XM_005162289.3"/>
</dbReference>
<dbReference type="RefSeq" id="XP_009295244.1">
    <property type="nucleotide sequence ID" value="XM_009296969.2"/>
</dbReference>
<dbReference type="RefSeq" id="XP_068073021.1">
    <property type="nucleotide sequence ID" value="XM_068216920.1"/>
</dbReference>
<dbReference type="PaxDb" id="7955-ENSDARP00000127626"/>
<dbReference type="GeneID" id="101883649"/>
<dbReference type="KEGG" id="dre:101883649"/>
<dbReference type="eggNOG" id="ENOG502S0MU">
    <property type="taxonomic scope" value="Eukaryota"/>
</dbReference>
<dbReference type="HOGENOM" id="CLU_634514_0_0_1"/>
<dbReference type="InParanoid" id="X1WBN4"/>
<dbReference type="OMA" id="ETNHKMH"/>
<dbReference type="OrthoDB" id="8946479at2759"/>
<dbReference type="Proteomes" id="UP000000437">
    <property type="component" value="Chromosome 23"/>
</dbReference>
<dbReference type="Bgee" id="ENSDARG00000098029">
    <property type="expression patterns" value="Expressed in early embryo and 8 other cell types or tissues"/>
</dbReference>
<dbReference type="InterPro" id="IPR027956">
    <property type="entry name" value="C1orf127-like"/>
</dbReference>
<dbReference type="InterPro" id="IPR049521">
    <property type="entry name" value="DUF4556"/>
</dbReference>
<dbReference type="PANTHER" id="PTHR38653">
    <property type="entry name" value="GENE 572-RELATED"/>
    <property type="match status" value="1"/>
</dbReference>
<dbReference type="PANTHER" id="PTHR38653:SF1">
    <property type="entry name" value="GENE 572-RELATED"/>
    <property type="match status" value="1"/>
</dbReference>
<dbReference type="Pfam" id="PF15094">
    <property type="entry name" value="DUF4556"/>
    <property type="match status" value="1"/>
</dbReference>
<protein>
    <recommendedName>
        <fullName>Ciliated left-right organizer protein containing ZP-N domains homolog</fullName>
    </recommendedName>
</protein>
<comment type="tissue specificity">
    <text evidence="1">Expressed specifically by cells of the ciliated left-right organizer.</text>
</comment>
<comment type="disruption phenotype">
    <text evidence="1">Morpholino knockdown of the protein does not cause observable left-right anomalies.</text>
</comment>
<reference key="1">
    <citation type="journal article" date="2013" name="Nature">
        <title>The zebrafish reference genome sequence and its relationship to the human genome.</title>
        <authorList>
            <person name="Howe K."/>
            <person name="Clark M.D."/>
            <person name="Torroja C.F."/>
            <person name="Torrance J."/>
            <person name="Berthelot C."/>
            <person name="Muffato M."/>
            <person name="Collins J.E."/>
            <person name="Humphray S."/>
            <person name="McLaren K."/>
            <person name="Matthews L."/>
            <person name="McLaren S."/>
            <person name="Sealy I."/>
            <person name="Caccamo M."/>
            <person name="Churcher C."/>
            <person name="Scott C."/>
            <person name="Barrett J.C."/>
            <person name="Koch R."/>
            <person name="Rauch G.J."/>
            <person name="White S."/>
            <person name="Chow W."/>
            <person name="Kilian B."/>
            <person name="Quintais L.T."/>
            <person name="Guerra-Assuncao J.A."/>
            <person name="Zhou Y."/>
            <person name="Gu Y."/>
            <person name="Yen J."/>
            <person name="Vogel J.H."/>
            <person name="Eyre T."/>
            <person name="Redmond S."/>
            <person name="Banerjee R."/>
            <person name="Chi J."/>
            <person name="Fu B."/>
            <person name="Langley E."/>
            <person name="Maguire S.F."/>
            <person name="Laird G.K."/>
            <person name="Lloyd D."/>
            <person name="Kenyon E."/>
            <person name="Donaldson S."/>
            <person name="Sehra H."/>
            <person name="Almeida-King J."/>
            <person name="Loveland J."/>
            <person name="Trevanion S."/>
            <person name="Jones M."/>
            <person name="Quail M."/>
            <person name="Willey D."/>
            <person name="Hunt A."/>
            <person name="Burton J."/>
            <person name="Sims S."/>
            <person name="McLay K."/>
            <person name="Plumb B."/>
            <person name="Davis J."/>
            <person name="Clee C."/>
            <person name="Oliver K."/>
            <person name="Clark R."/>
            <person name="Riddle C."/>
            <person name="Elliot D."/>
            <person name="Threadgold G."/>
            <person name="Harden G."/>
            <person name="Ware D."/>
            <person name="Begum S."/>
            <person name="Mortimore B."/>
            <person name="Kerry G."/>
            <person name="Heath P."/>
            <person name="Phillimore B."/>
            <person name="Tracey A."/>
            <person name="Corby N."/>
            <person name="Dunn M."/>
            <person name="Johnson C."/>
            <person name="Wood J."/>
            <person name="Clark S."/>
            <person name="Pelan S."/>
            <person name="Griffiths G."/>
            <person name="Smith M."/>
            <person name="Glithero R."/>
            <person name="Howden P."/>
            <person name="Barker N."/>
            <person name="Lloyd C."/>
            <person name="Stevens C."/>
            <person name="Harley J."/>
            <person name="Holt K."/>
            <person name="Panagiotidis G."/>
            <person name="Lovell J."/>
            <person name="Beasley H."/>
            <person name="Henderson C."/>
            <person name="Gordon D."/>
            <person name="Auger K."/>
            <person name="Wright D."/>
            <person name="Collins J."/>
            <person name="Raisen C."/>
            <person name="Dyer L."/>
            <person name="Leung K."/>
            <person name="Robertson L."/>
            <person name="Ambridge K."/>
            <person name="Leongamornlert D."/>
            <person name="McGuire S."/>
            <person name="Gilderthorp R."/>
            <person name="Griffiths C."/>
            <person name="Manthravadi D."/>
            <person name="Nichol S."/>
            <person name="Barker G."/>
            <person name="Whitehead S."/>
            <person name="Kay M."/>
            <person name="Brown J."/>
            <person name="Murnane C."/>
            <person name="Gray E."/>
            <person name="Humphries M."/>
            <person name="Sycamore N."/>
            <person name="Barker D."/>
            <person name="Saunders D."/>
            <person name="Wallis J."/>
            <person name="Babbage A."/>
            <person name="Hammond S."/>
            <person name="Mashreghi-Mohammadi M."/>
            <person name="Barr L."/>
            <person name="Martin S."/>
            <person name="Wray P."/>
            <person name="Ellington A."/>
            <person name="Matthews N."/>
            <person name="Ellwood M."/>
            <person name="Woodmansey R."/>
            <person name="Clark G."/>
            <person name="Cooper J."/>
            <person name="Tromans A."/>
            <person name="Grafham D."/>
            <person name="Skuce C."/>
            <person name="Pandian R."/>
            <person name="Andrews R."/>
            <person name="Harrison E."/>
            <person name="Kimberley A."/>
            <person name="Garnett J."/>
            <person name="Fosker N."/>
            <person name="Hall R."/>
            <person name="Garner P."/>
            <person name="Kelly D."/>
            <person name="Bird C."/>
            <person name="Palmer S."/>
            <person name="Gehring I."/>
            <person name="Berger A."/>
            <person name="Dooley C.M."/>
            <person name="Ersan-Urun Z."/>
            <person name="Eser C."/>
            <person name="Geiger H."/>
            <person name="Geisler M."/>
            <person name="Karotki L."/>
            <person name="Kirn A."/>
            <person name="Konantz J."/>
            <person name="Konantz M."/>
            <person name="Oberlander M."/>
            <person name="Rudolph-Geiger S."/>
            <person name="Teucke M."/>
            <person name="Lanz C."/>
            <person name="Raddatz G."/>
            <person name="Osoegawa K."/>
            <person name="Zhu B."/>
            <person name="Rapp A."/>
            <person name="Widaa S."/>
            <person name="Langford C."/>
            <person name="Yang F."/>
            <person name="Schuster S.C."/>
            <person name="Carter N.P."/>
            <person name="Harrow J."/>
            <person name="Ning Z."/>
            <person name="Herrero J."/>
            <person name="Searle S.M."/>
            <person name="Enright A."/>
            <person name="Geisler R."/>
            <person name="Plasterk R.H."/>
            <person name="Lee C."/>
            <person name="Westerfield M."/>
            <person name="de Jong P.J."/>
            <person name="Zon L.I."/>
            <person name="Postlethwait J.H."/>
            <person name="Nusslein-Volhard C."/>
            <person name="Hubbard T.J."/>
            <person name="Roest Crollius H."/>
            <person name="Rogers J."/>
            <person name="Stemple D.L."/>
        </authorList>
    </citation>
    <scope>NUCLEOTIDE SEQUENCE [LARGE SCALE GENOMIC DNA]</scope>
    <source>
        <strain>Tuebingen</strain>
    </source>
</reference>
<reference key="2">
    <citation type="journal article" date="2024" name="Am. J. Hum. Genet.">
        <title>CIROZ is dispensable in ancestral vertebrates but essential for left-right patterning in humans.</title>
        <authorList>
            <person name="Szenker-Ravi E."/>
            <person name="Ott T."/>
            <person name="Yusof A."/>
            <person name="Chopra M."/>
            <person name="Khatoo M."/>
            <person name="Pak B."/>
            <person name="Xuan Goh W."/>
            <person name="Beckers A."/>
            <person name="Brady A.F."/>
            <person name="Ewans L.J."/>
            <person name="Djaziri N."/>
            <person name="Almontashiri N.A.M."/>
            <person name="Alghamdi M.A."/>
            <person name="Alharby E."/>
            <person name="Dasouki M."/>
            <person name="Romo L."/>
            <person name="Tan W.H."/>
            <person name="Maddirevula S."/>
            <person name="Alkuraya F.S."/>
            <person name="Giordano J.L."/>
            <person name="Alkelai A."/>
            <person name="Wapner R.J."/>
            <person name="Stals K."/>
            <person name="Alfadhel M."/>
            <person name="Alswaid A.F."/>
            <person name="Bogusch S."/>
            <person name="Schafer-Kosulya A."/>
            <person name="Vogel S."/>
            <person name="Vick P."/>
            <person name="Schweickert A."/>
            <person name="Wakeling M."/>
            <person name="Moreau de Bellaing A."/>
            <person name="Alshamsi A.M."/>
            <person name="Sanlaville D."/>
            <person name="Mbarek H."/>
            <person name="Saad C."/>
            <person name="Ellard S."/>
            <person name="Eisenhaber F."/>
            <person name="Tripolszki K."/>
            <person name="Beetz C."/>
            <person name="Bauer P."/>
            <person name="Gossler A."/>
            <person name="Eisenhaber B."/>
            <person name="Blum M."/>
            <person name="Bouvagnet P."/>
            <person name="Bertoli-Avella A."/>
            <person name="Amiel J."/>
            <person name="Gordon C.T."/>
            <person name="Reversade B."/>
        </authorList>
    </citation>
    <scope>DISRUPTION PHENOTYPE</scope>
    <scope>TISSUE SPECIFICITY</scope>
</reference>
<evidence type="ECO:0000269" key="1">
    <source>
    </source>
</evidence>
<name>CIROZ_DANRE</name>
<feature type="chain" id="PRO_0000462343" description="Ciliated left-right organizer protein containing ZP-N domains homolog">
    <location>
        <begin position="1"/>
        <end position="432"/>
    </location>
</feature>
<keyword id="KW-1185">Reference proteome</keyword>
<organism>
    <name type="scientific">Danio rerio</name>
    <name type="common">Zebrafish</name>
    <name type="synonym">Brachydanio rerio</name>
    <dbReference type="NCBI Taxonomy" id="7955"/>
    <lineage>
        <taxon>Eukaryota</taxon>
        <taxon>Metazoa</taxon>
        <taxon>Chordata</taxon>
        <taxon>Craniata</taxon>
        <taxon>Vertebrata</taxon>
        <taxon>Euteleostomi</taxon>
        <taxon>Actinopterygii</taxon>
        <taxon>Neopterygii</taxon>
        <taxon>Teleostei</taxon>
        <taxon>Ostariophysi</taxon>
        <taxon>Cypriniformes</taxon>
        <taxon>Danionidae</taxon>
        <taxon>Danioninae</taxon>
        <taxon>Danio</taxon>
    </lineage>
</organism>
<gene>
    <name type="primary">ciroz</name>
    <name type="synonym">si:ch211-129o18.4</name>
</gene>
<accession>X1WBN4</accession>
<sequence>MGSPSSSMTEGDVECFSEYMELWIHRLRIEGLRLWLSGILRIQVGLVSMENLNHQLSSCGFALHRDLDKNYVFRVMYSGCFVQLEHGNYVIVLNLLKRVSRFGGRTQKFMMKCPAVLAPPNREYIQCDSDSIQVTREIPVDNWNNELDWSLALRGSLVVALEDSSLIQINVEMHKPNITVQGRRDTILSPVQVFASEGHFLPLKLVSGNYAYSMEATCPNGNTSSSNETVLHIYKRRMGLTKRGGYQNETLSVSSVMVEQTDTFSWTETTDFVQLIIPTSYIQQNKECLSQTGEKLQQNFYKIDAVLTFKETNHKMHWTMENTSPCSELLKSHSVYDDPQKANFTTHSPTWTAERPEIPADYTTNLTPSVSPSTTSTALQTADPDTGTTSMPTPQLKTTEVFNTSTPLSSQEVFSSTLYSPNHNSTSSSVHQ</sequence>